<feature type="chain" id="PRO_0000405044" description="Lissencephaly-1 homolog">
    <location>
        <begin position="1"/>
        <end position="411"/>
    </location>
</feature>
<feature type="domain" description="LisH" evidence="1">
    <location>
        <begin position="9"/>
        <end position="41"/>
    </location>
</feature>
<feature type="repeat" description="WD 1">
    <location>
        <begin position="106"/>
        <end position="147"/>
    </location>
</feature>
<feature type="repeat" description="WD 2">
    <location>
        <begin position="148"/>
        <end position="187"/>
    </location>
</feature>
<feature type="repeat" description="WD 3">
    <location>
        <begin position="191"/>
        <end position="230"/>
    </location>
</feature>
<feature type="repeat" description="WD 4">
    <location>
        <begin position="233"/>
        <end position="272"/>
    </location>
</feature>
<feature type="repeat" description="WD 5">
    <location>
        <begin position="275"/>
        <end position="334"/>
    </location>
</feature>
<feature type="repeat" description="WD 6">
    <location>
        <begin position="337"/>
        <end position="376"/>
    </location>
</feature>
<feature type="repeat" description="WD 7">
    <location>
        <begin position="379"/>
        <end position="411"/>
    </location>
</feature>
<feature type="coiled-coil region" evidence="1">
    <location>
        <begin position="56"/>
        <end position="83"/>
    </location>
</feature>
<evidence type="ECO:0000255" key="1">
    <source>
        <dbReference type="HAMAP-Rule" id="MF_03141"/>
    </source>
</evidence>
<keyword id="KW-0131">Cell cycle</keyword>
<keyword id="KW-0132">Cell division</keyword>
<keyword id="KW-0175">Coiled coil</keyword>
<keyword id="KW-0963">Cytoplasm</keyword>
<keyword id="KW-0206">Cytoskeleton</keyword>
<keyword id="KW-0493">Microtubule</keyword>
<keyword id="KW-0498">Mitosis</keyword>
<keyword id="KW-1185">Reference proteome</keyword>
<keyword id="KW-0677">Repeat</keyword>
<keyword id="KW-0813">Transport</keyword>
<keyword id="KW-0853">WD repeat</keyword>
<sequence>MKMVLSQRQREELNQAIADYLGSNGYGDSLETFRKEADVSTESEKKFGGLLEKKWTSVIRLQKKVMELEAKLTEAEKEVIEGAPTKNKRTPGEWIPRPPEKYSLTGHRASITRVIFHPIFGLMVSASEDATIKIWDFETGEYERSLKGHTDSVQDVAFDSQGKLLASCSADLSIKLWDFQQSYECVKTMHGHDHNVSSVAFVPAGDYVLSASRDRTIKMWEVATGYCVKTYTGHREWVRMVRVHIEGSIFATCSNDHTIRVWLMNSKDCKVELRDHEHTVECIAWAPEAAASAINEAAGADNKKGHHQGPFLASGSRDKTIRIWDVSVGLCLLTLNGHDNWVRGLAFHPGGKYLVSASDDKTIRVWDLRNKRCMKTLYAHQHFCTSIDFHKAHPYVISGSVDQTVKVWECR</sequence>
<organism>
    <name type="scientific">Drosophila persimilis</name>
    <name type="common">Fruit fly</name>
    <dbReference type="NCBI Taxonomy" id="7234"/>
    <lineage>
        <taxon>Eukaryota</taxon>
        <taxon>Metazoa</taxon>
        <taxon>Ecdysozoa</taxon>
        <taxon>Arthropoda</taxon>
        <taxon>Hexapoda</taxon>
        <taxon>Insecta</taxon>
        <taxon>Pterygota</taxon>
        <taxon>Neoptera</taxon>
        <taxon>Endopterygota</taxon>
        <taxon>Diptera</taxon>
        <taxon>Brachycera</taxon>
        <taxon>Muscomorpha</taxon>
        <taxon>Ephydroidea</taxon>
        <taxon>Drosophilidae</taxon>
        <taxon>Drosophila</taxon>
        <taxon>Sophophora</taxon>
    </lineage>
</organism>
<gene>
    <name evidence="1" type="primary">Lis-1</name>
    <name type="ORF">GL10701</name>
</gene>
<comment type="function">
    <text evidence="1">Positively regulates the activity of the minus-end directed microtubule motor protein dynein. May enhance dynein-mediated microtubule sliding by targeting dynein to the microtubule plus end. Required for several dynein- and microtubule-dependent processes.</text>
</comment>
<comment type="subcellular location">
    <subcellularLocation>
        <location evidence="1">Cytoplasm</location>
        <location evidence="1">Cytoskeleton</location>
    </subcellularLocation>
    <subcellularLocation>
        <location evidence="1">Cytoplasm</location>
        <location evidence="1">Cytoskeleton</location>
        <location evidence="1">Microtubule organizing center</location>
        <location evidence="1">Centrosome</location>
    </subcellularLocation>
    <text evidence="1">Localizes to the plus end of microtubules and to the centrosome.</text>
</comment>
<comment type="domain">
    <text evidence="1">Dimerization mediated by the LisH domain may be required to activate dynein.</text>
</comment>
<comment type="similarity">
    <text evidence="1">Belongs to the WD repeat LIS1/nudF family.</text>
</comment>
<dbReference type="EMBL" id="CH479181">
    <property type="protein sequence ID" value="EDW31943.1"/>
    <property type="molecule type" value="Genomic_DNA"/>
</dbReference>
<dbReference type="SMR" id="B4GAJ1"/>
<dbReference type="STRING" id="7234.B4GAJ1"/>
<dbReference type="EnsemblMetazoa" id="FBtr0176316">
    <property type="protein sequence ID" value="FBpp0174808"/>
    <property type="gene ID" value="FBgn0148311"/>
</dbReference>
<dbReference type="EnsemblMetazoa" id="XM_002016017.2">
    <property type="protein sequence ID" value="XP_002016053.1"/>
    <property type="gene ID" value="LOC6590003"/>
</dbReference>
<dbReference type="GeneID" id="6590003"/>
<dbReference type="KEGG" id="dpe:6590003"/>
<dbReference type="CTD" id="36791"/>
<dbReference type="eggNOG" id="KOG0295">
    <property type="taxonomic scope" value="Eukaryota"/>
</dbReference>
<dbReference type="HOGENOM" id="CLU_000288_57_15_1"/>
<dbReference type="OMA" id="WHVATKE"/>
<dbReference type="OrthoDB" id="674604at2759"/>
<dbReference type="PhylomeDB" id="B4GAJ1"/>
<dbReference type="Proteomes" id="UP000008744">
    <property type="component" value="Unassembled WGS sequence"/>
</dbReference>
<dbReference type="GO" id="GO:1904115">
    <property type="term" value="C:axon cytoplasm"/>
    <property type="evidence" value="ECO:0007669"/>
    <property type="project" value="GOC"/>
</dbReference>
<dbReference type="GO" id="GO:0005938">
    <property type="term" value="C:cell cortex"/>
    <property type="evidence" value="ECO:0007669"/>
    <property type="project" value="EnsemblMetazoa"/>
</dbReference>
<dbReference type="GO" id="GO:0030425">
    <property type="term" value="C:dendrite"/>
    <property type="evidence" value="ECO:0007669"/>
    <property type="project" value="EnsemblMetazoa"/>
</dbReference>
<dbReference type="GO" id="GO:0005869">
    <property type="term" value="C:dynactin complex"/>
    <property type="evidence" value="ECO:0007669"/>
    <property type="project" value="EnsemblMetazoa"/>
</dbReference>
<dbReference type="GO" id="GO:0030286">
    <property type="term" value="C:dynein complex"/>
    <property type="evidence" value="ECO:0007669"/>
    <property type="project" value="EnsemblMetazoa"/>
</dbReference>
<dbReference type="GO" id="GO:0030426">
    <property type="term" value="C:growth cone"/>
    <property type="evidence" value="ECO:0007669"/>
    <property type="project" value="EnsemblMetazoa"/>
</dbReference>
<dbReference type="GO" id="GO:0000776">
    <property type="term" value="C:kinetochore"/>
    <property type="evidence" value="ECO:0007669"/>
    <property type="project" value="EnsemblMetazoa"/>
</dbReference>
<dbReference type="GO" id="GO:0005828">
    <property type="term" value="C:kinetochore microtubule"/>
    <property type="evidence" value="ECO:0007669"/>
    <property type="project" value="EnsemblMetazoa"/>
</dbReference>
<dbReference type="GO" id="GO:0043025">
    <property type="term" value="C:neuronal cell body"/>
    <property type="evidence" value="ECO:0007669"/>
    <property type="project" value="EnsemblMetazoa"/>
</dbReference>
<dbReference type="GO" id="GO:0031616">
    <property type="term" value="C:spindle pole centrosome"/>
    <property type="evidence" value="ECO:0007669"/>
    <property type="project" value="EnsemblMetazoa"/>
</dbReference>
<dbReference type="GO" id="GO:0070840">
    <property type="term" value="F:dynein complex binding"/>
    <property type="evidence" value="ECO:0007669"/>
    <property type="project" value="UniProtKB-UniRule"/>
</dbReference>
<dbReference type="GO" id="GO:0007298">
    <property type="term" value="P:border follicle cell migration"/>
    <property type="evidence" value="ECO:0007669"/>
    <property type="project" value="EnsemblMetazoa"/>
</dbReference>
<dbReference type="GO" id="GO:0051642">
    <property type="term" value="P:centrosome localization"/>
    <property type="evidence" value="ECO:0007669"/>
    <property type="project" value="EnsemblMetazoa"/>
</dbReference>
<dbReference type="GO" id="GO:0051299">
    <property type="term" value="P:centrosome separation"/>
    <property type="evidence" value="ECO:0007669"/>
    <property type="project" value="EnsemblMetazoa"/>
</dbReference>
<dbReference type="GO" id="GO:0030381">
    <property type="term" value="P:chorion-containing eggshell pattern formation"/>
    <property type="evidence" value="ECO:0007669"/>
    <property type="project" value="EnsemblMetazoa"/>
</dbReference>
<dbReference type="GO" id="GO:0061883">
    <property type="term" value="P:clathrin-dependent endocytosis involved in vitellogenesis"/>
    <property type="evidence" value="ECO:0007669"/>
    <property type="project" value="EnsemblMetazoa"/>
</dbReference>
<dbReference type="GO" id="GO:0048813">
    <property type="term" value="P:dendrite morphogenesis"/>
    <property type="evidence" value="ECO:0007669"/>
    <property type="project" value="EnsemblMetazoa"/>
</dbReference>
<dbReference type="GO" id="GO:0000132">
    <property type="term" value="P:establishment of mitotic spindle orientation"/>
    <property type="evidence" value="ECO:0007669"/>
    <property type="project" value="UniProtKB-UniRule"/>
</dbReference>
<dbReference type="GO" id="GO:0048142">
    <property type="term" value="P:germarium-derived cystoblast division"/>
    <property type="evidence" value="ECO:0007669"/>
    <property type="project" value="EnsemblMetazoa"/>
</dbReference>
<dbReference type="GO" id="GO:0007294">
    <property type="term" value="P:germarium-derived oocyte fate determination"/>
    <property type="evidence" value="ECO:0007669"/>
    <property type="project" value="EnsemblMetazoa"/>
</dbReference>
<dbReference type="GO" id="GO:0008298">
    <property type="term" value="P:intracellular mRNA localization"/>
    <property type="evidence" value="ECO:0007669"/>
    <property type="project" value="EnsemblMetazoa"/>
</dbReference>
<dbReference type="GO" id="GO:0006886">
    <property type="term" value="P:intracellular protein transport"/>
    <property type="evidence" value="ECO:0007669"/>
    <property type="project" value="EnsemblMetazoa"/>
</dbReference>
<dbReference type="GO" id="GO:0051383">
    <property type="term" value="P:kinetochore organization"/>
    <property type="evidence" value="ECO:0007669"/>
    <property type="project" value="EnsemblMetazoa"/>
</dbReference>
<dbReference type="GO" id="GO:0051012">
    <property type="term" value="P:microtubule sliding"/>
    <property type="evidence" value="ECO:0007669"/>
    <property type="project" value="UniProtKB-UniRule"/>
</dbReference>
<dbReference type="GO" id="GO:0046716">
    <property type="term" value="P:muscle cell cellular homeostasis"/>
    <property type="evidence" value="ECO:0007669"/>
    <property type="project" value="EnsemblMetazoa"/>
</dbReference>
<dbReference type="GO" id="GO:0016319">
    <property type="term" value="P:mushroom body development"/>
    <property type="evidence" value="ECO:0007669"/>
    <property type="project" value="EnsemblMetazoa"/>
</dbReference>
<dbReference type="GO" id="GO:0007405">
    <property type="term" value="P:neuroblast proliferation"/>
    <property type="evidence" value="ECO:0007669"/>
    <property type="project" value="EnsemblMetazoa"/>
</dbReference>
<dbReference type="GO" id="GO:0030473">
    <property type="term" value="P:nuclear migration along microtubule"/>
    <property type="evidence" value="ECO:0007669"/>
    <property type="project" value="EnsemblMetazoa"/>
</dbReference>
<dbReference type="GO" id="GO:0007312">
    <property type="term" value="P:oocyte nucleus migration involved in oocyte dorsal/ventral axis specification"/>
    <property type="evidence" value="ECO:0007669"/>
    <property type="project" value="EnsemblMetazoa"/>
</dbReference>
<dbReference type="GO" id="GO:0030723">
    <property type="term" value="P:ovarian fusome organization"/>
    <property type="evidence" value="ECO:0007669"/>
    <property type="project" value="EnsemblMetazoa"/>
</dbReference>
<dbReference type="GO" id="GO:0007300">
    <property type="term" value="P:ovarian nurse cell to oocyte transport"/>
    <property type="evidence" value="ECO:0007669"/>
    <property type="project" value="EnsemblMetazoa"/>
</dbReference>
<dbReference type="GO" id="GO:0072499">
    <property type="term" value="P:photoreceptor cell axon guidance"/>
    <property type="evidence" value="ECO:0007669"/>
    <property type="project" value="EnsemblMetazoa"/>
</dbReference>
<dbReference type="GO" id="GO:0050772">
    <property type="term" value="P:positive regulation of axonogenesis"/>
    <property type="evidence" value="ECO:0007669"/>
    <property type="project" value="EnsemblMetazoa"/>
</dbReference>
<dbReference type="GO" id="GO:0030513">
    <property type="term" value="P:positive regulation of BMP signaling pathway"/>
    <property type="evidence" value="ECO:0007669"/>
    <property type="project" value="EnsemblMetazoa"/>
</dbReference>
<dbReference type="GO" id="GO:0045842">
    <property type="term" value="P:positive regulation of mitotic metaphase/anaphase transition"/>
    <property type="evidence" value="ECO:0007669"/>
    <property type="project" value="EnsemblMetazoa"/>
</dbReference>
<dbReference type="GO" id="GO:0034501">
    <property type="term" value="P:protein localization to kinetochore"/>
    <property type="evidence" value="ECO:0007669"/>
    <property type="project" value="EnsemblMetazoa"/>
</dbReference>
<dbReference type="GO" id="GO:0048814">
    <property type="term" value="P:regulation of dendrite morphogenesis"/>
    <property type="evidence" value="ECO:0007669"/>
    <property type="project" value="EnsemblMetazoa"/>
</dbReference>
<dbReference type="GO" id="GO:0008090">
    <property type="term" value="P:retrograde axonal transport"/>
    <property type="evidence" value="ECO:0007669"/>
    <property type="project" value="EnsemblMetazoa"/>
</dbReference>
<dbReference type="GO" id="GO:0042052">
    <property type="term" value="P:rhabdomere development"/>
    <property type="evidence" value="ECO:0007669"/>
    <property type="project" value="EnsemblMetazoa"/>
</dbReference>
<dbReference type="GO" id="GO:0007283">
    <property type="term" value="P:spermatogenesis"/>
    <property type="evidence" value="ECO:0007669"/>
    <property type="project" value="EnsemblMetazoa"/>
</dbReference>
<dbReference type="GO" id="GO:0051225">
    <property type="term" value="P:spindle assembly"/>
    <property type="evidence" value="ECO:0007669"/>
    <property type="project" value="EnsemblMetazoa"/>
</dbReference>
<dbReference type="GO" id="GO:0019827">
    <property type="term" value="P:stem cell population maintenance"/>
    <property type="evidence" value="ECO:0007669"/>
    <property type="project" value="EnsemblMetazoa"/>
</dbReference>
<dbReference type="CDD" id="cd00200">
    <property type="entry name" value="WD40"/>
    <property type="match status" value="1"/>
</dbReference>
<dbReference type="FunFam" id="2.130.10.10:FF:000038">
    <property type="entry name" value="Lissencephaly-1 homolog B"/>
    <property type="match status" value="1"/>
</dbReference>
<dbReference type="FunFam" id="1.20.960.30:FF:000002">
    <property type="entry name" value="Platelet-activating factor acetylhydrolase ib"/>
    <property type="match status" value="1"/>
</dbReference>
<dbReference type="Gene3D" id="1.20.960.30">
    <property type="match status" value="1"/>
</dbReference>
<dbReference type="Gene3D" id="2.130.10.10">
    <property type="entry name" value="YVTN repeat-like/Quinoprotein amine dehydrogenase"/>
    <property type="match status" value="1"/>
</dbReference>
<dbReference type="HAMAP" id="MF_03141">
    <property type="entry name" value="lis1"/>
    <property type="match status" value="1"/>
</dbReference>
<dbReference type="InterPro" id="IPR017252">
    <property type="entry name" value="Dynein_regulator_LIS1"/>
</dbReference>
<dbReference type="InterPro" id="IPR020472">
    <property type="entry name" value="G-protein_beta_WD-40_rep"/>
</dbReference>
<dbReference type="InterPro" id="IPR037190">
    <property type="entry name" value="LIS1_N"/>
</dbReference>
<dbReference type="InterPro" id="IPR006594">
    <property type="entry name" value="LisH"/>
</dbReference>
<dbReference type="InterPro" id="IPR056795">
    <property type="entry name" value="PAC1-like_LisH-like_dom"/>
</dbReference>
<dbReference type="InterPro" id="IPR015943">
    <property type="entry name" value="WD40/YVTN_repeat-like_dom_sf"/>
</dbReference>
<dbReference type="InterPro" id="IPR019775">
    <property type="entry name" value="WD40_repeat_CS"/>
</dbReference>
<dbReference type="InterPro" id="IPR036322">
    <property type="entry name" value="WD40_repeat_dom_sf"/>
</dbReference>
<dbReference type="InterPro" id="IPR001680">
    <property type="entry name" value="WD40_rpt"/>
</dbReference>
<dbReference type="InterPro" id="IPR050349">
    <property type="entry name" value="WD_LIS1/nudF_dynein_reg"/>
</dbReference>
<dbReference type="PANTHER" id="PTHR44129">
    <property type="entry name" value="WD REPEAT-CONTAINING PROTEIN POP1"/>
    <property type="match status" value="1"/>
</dbReference>
<dbReference type="Pfam" id="PF24951">
    <property type="entry name" value="LisH_PAC1"/>
    <property type="match status" value="1"/>
</dbReference>
<dbReference type="Pfam" id="PF00400">
    <property type="entry name" value="WD40"/>
    <property type="match status" value="7"/>
</dbReference>
<dbReference type="PIRSF" id="PIRSF037647">
    <property type="entry name" value="Dynein_regulator_Lis1"/>
    <property type="match status" value="1"/>
</dbReference>
<dbReference type="PRINTS" id="PR00320">
    <property type="entry name" value="GPROTEINBRPT"/>
</dbReference>
<dbReference type="SMART" id="SM00667">
    <property type="entry name" value="LisH"/>
    <property type="match status" value="1"/>
</dbReference>
<dbReference type="SMART" id="SM00320">
    <property type="entry name" value="WD40"/>
    <property type="match status" value="7"/>
</dbReference>
<dbReference type="SUPFAM" id="SSF109925">
    <property type="entry name" value="Lissencephaly-1 protein (Lis-1, PAF-AH alpha) N-terminal domain"/>
    <property type="match status" value="1"/>
</dbReference>
<dbReference type="SUPFAM" id="SSF50978">
    <property type="entry name" value="WD40 repeat-like"/>
    <property type="match status" value="1"/>
</dbReference>
<dbReference type="PROSITE" id="PS50896">
    <property type="entry name" value="LISH"/>
    <property type="match status" value="1"/>
</dbReference>
<dbReference type="PROSITE" id="PS00678">
    <property type="entry name" value="WD_REPEATS_1"/>
    <property type="match status" value="6"/>
</dbReference>
<dbReference type="PROSITE" id="PS50082">
    <property type="entry name" value="WD_REPEATS_2"/>
    <property type="match status" value="7"/>
</dbReference>
<dbReference type="PROSITE" id="PS50294">
    <property type="entry name" value="WD_REPEATS_REGION"/>
    <property type="match status" value="1"/>
</dbReference>
<name>LIS1_DROPE</name>
<accession>B4GAJ1</accession>
<protein>
    <recommendedName>
        <fullName evidence="1">Lissencephaly-1 homolog</fullName>
    </recommendedName>
</protein>
<proteinExistence type="inferred from homology"/>
<reference key="1">
    <citation type="journal article" date="2007" name="Nature">
        <title>Evolution of genes and genomes on the Drosophila phylogeny.</title>
        <authorList>
            <consortium name="Drosophila 12 genomes consortium"/>
        </authorList>
    </citation>
    <scope>NUCLEOTIDE SEQUENCE [LARGE SCALE GENOMIC DNA]</scope>
    <source>
        <strain>MSH-3 / Tucson 14011-0111.49</strain>
    </source>
</reference>